<dbReference type="EC" id="2.4.2.18" evidence="1"/>
<dbReference type="EMBL" id="CP000708">
    <property type="protein sequence ID" value="ABQ61085.1"/>
    <property type="status" value="ALT_INIT"/>
    <property type="molecule type" value="Genomic_DNA"/>
</dbReference>
<dbReference type="RefSeq" id="WP_006012657.1">
    <property type="nucleotide sequence ID" value="NC_009505.1"/>
</dbReference>
<dbReference type="SMR" id="A5VQR4"/>
<dbReference type="GeneID" id="45124516"/>
<dbReference type="KEGG" id="bov:BOV_1099"/>
<dbReference type="HOGENOM" id="CLU_034315_2_1_5"/>
<dbReference type="UniPathway" id="UPA00035">
    <property type="reaction ID" value="UER00041"/>
</dbReference>
<dbReference type="Proteomes" id="UP000006383">
    <property type="component" value="Chromosome I"/>
</dbReference>
<dbReference type="GO" id="GO:0005829">
    <property type="term" value="C:cytosol"/>
    <property type="evidence" value="ECO:0007669"/>
    <property type="project" value="TreeGrafter"/>
</dbReference>
<dbReference type="GO" id="GO:0004048">
    <property type="term" value="F:anthranilate phosphoribosyltransferase activity"/>
    <property type="evidence" value="ECO:0007669"/>
    <property type="project" value="UniProtKB-UniRule"/>
</dbReference>
<dbReference type="GO" id="GO:0000287">
    <property type="term" value="F:magnesium ion binding"/>
    <property type="evidence" value="ECO:0007669"/>
    <property type="project" value="UniProtKB-UniRule"/>
</dbReference>
<dbReference type="GO" id="GO:0000162">
    <property type="term" value="P:L-tryptophan biosynthetic process"/>
    <property type="evidence" value="ECO:0007669"/>
    <property type="project" value="UniProtKB-UniRule"/>
</dbReference>
<dbReference type="FunFam" id="3.40.1030.10:FF:000002">
    <property type="entry name" value="Anthranilate phosphoribosyltransferase"/>
    <property type="match status" value="1"/>
</dbReference>
<dbReference type="Gene3D" id="3.40.1030.10">
    <property type="entry name" value="Nucleoside phosphorylase/phosphoribosyltransferase catalytic domain"/>
    <property type="match status" value="1"/>
</dbReference>
<dbReference type="Gene3D" id="1.20.970.10">
    <property type="entry name" value="Transferase, Pyrimidine Nucleoside Phosphorylase, Chain C"/>
    <property type="match status" value="1"/>
</dbReference>
<dbReference type="HAMAP" id="MF_00211">
    <property type="entry name" value="TrpD"/>
    <property type="match status" value="1"/>
</dbReference>
<dbReference type="InterPro" id="IPR005940">
    <property type="entry name" value="Anthranilate_Pribosyl_Tfrase"/>
</dbReference>
<dbReference type="InterPro" id="IPR000312">
    <property type="entry name" value="Glycosyl_Trfase_fam3"/>
</dbReference>
<dbReference type="InterPro" id="IPR017459">
    <property type="entry name" value="Glycosyl_Trfase_fam3_N_dom"/>
</dbReference>
<dbReference type="InterPro" id="IPR036320">
    <property type="entry name" value="Glycosyl_Trfase_fam3_N_dom_sf"/>
</dbReference>
<dbReference type="InterPro" id="IPR035902">
    <property type="entry name" value="Nuc_phospho_transferase"/>
</dbReference>
<dbReference type="NCBIfam" id="TIGR01245">
    <property type="entry name" value="trpD"/>
    <property type="match status" value="1"/>
</dbReference>
<dbReference type="PANTHER" id="PTHR43285">
    <property type="entry name" value="ANTHRANILATE PHOSPHORIBOSYLTRANSFERASE"/>
    <property type="match status" value="1"/>
</dbReference>
<dbReference type="PANTHER" id="PTHR43285:SF2">
    <property type="entry name" value="ANTHRANILATE PHOSPHORIBOSYLTRANSFERASE"/>
    <property type="match status" value="1"/>
</dbReference>
<dbReference type="Pfam" id="PF02885">
    <property type="entry name" value="Glycos_trans_3N"/>
    <property type="match status" value="1"/>
</dbReference>
<dbReference type="Pfam" id="PF00591">
    <property type="entry name" value="Glycos_transf_3"/>
    <property type="match status" value="1"/>
</dbReference>
<dbReference type="SUPFAM" id="SSF52418">
    <property type="entry name" value="Nucleoside phosphorylase/phosphoribosyltransferase catalytic domain"/>
    <property type="match status" value="1"/>
</dbReference>
<dbReference type="SUPFAM" id="SSF47648">
    <property type="entry name" value="Nucleoside phosphorylase/phosphoribosyltransferase N-terminal domain"/>
    <property type="match status" value="1"/>
</dbReference>
<protein>
    <recommendedName>
        <fullName evidence="1">Anthranilate phosphoribosyltransferase</fullName>
        <ecNumber evidence="1">2.4.2.18</ecNumber>
    </recommendedName>
</protein>
<organism>
    <name type="scientific">Brucella ovis (strain ATCC 25840 / 63/290 / NCTC 10512)</name>
    <dbReference type="NCBI Taxonomy" id="444178"/>
    <lineage>
        <taxon>Bacteria</taxon>
        <taxon>Pseudomonadati</taxon>
        <taxon>Pseudomonadota</taxon>
        <taxon>Alphaproteobacteria</taxon>
        <taxon>Hyphomicrobiales</taxon>
        <taxon>Brucellaceae</taxon>
        <taxon>Brucella/Ochrobactrum group</taxon>
        <taxon>Brucella</taxon>
    </lineage>
</organism>
<feature type="chain" id="PRO_0000325415" description="Anthranilate phosphoribosyltransferase">
    <location>
        <begin position="1"/>
        <end position="339"/>
    </location>
</feature>
<feature type="binding site" evidence="1">
    <location>
        <position position="81"/>
    </location>
    <ligand>
        <name>5-phospho-alpha-D-ribose 1-diphosphate</name>
        <dbReference type="ChEBI" id="CHEBI:58017"/>
    </ligand>
</feature>
<feature type="binding site" evidence="1">
    <location>
        <position position="81"/>
    </location>
    <ligand>
        <name>anthranilate</name>
        <dbReference type="ChEBI" id="CHEBI:16567"/>
        <label>1</label>
    </ligand>
</feature>
<feature type="binding site" evidence="1">
    <location>
        <begin position="84"/>
        <end position="85"/>
    </location>
    <ligand>
        <name>5-phospho-alpha-D-ribose 1-diphosphate</name>
        <dbReference type="ChEBI" id="CHEBI:58017"/>
    </ligand>
</feature>
<feature type="binding site" evidence="1">
    <location>
        <position position="89"/>
    </location>
    <ligand>
        <name>5-phospho-alpha-D-ribose 1-diphosphate</name>
        <dbReference type="ChEBI" id="CHEBI:58017"/>
    </ligand>
</feature>
<feature type="binding site" evidence="1">
    <location>
        <begin position="91"/>
        <end position="94"/>
    </location>
    <ligand>
        <name>5-phospho-alpha-D-ribose 1-diphosphate</name>
        <dbReference type="ChEBI" id="CHEBI:58017"/>
    </ligand>
</feature>
<feature type="binding site" evidence="1">
    <location>
        <position position="93"/>
    </location>
    <ligand>
        <name>Mg(2+)</name>
        <dbReference type="ChEBI" id="CHEBI:18420"/>
        <label>1</label>
    </ligand>
</feature>
<feature type="binding site" evidence="1">
    <location>
        <begin position="109"/>
        <end position="117"/>
    </location>
    <ligand>
        <name>5-phospho-alpha-D-ribose 1-diphosphate</name>
        <dbReference type="ChEBI" id="CHEBI:58017"/>
    </ligand>
</feature>
<feature type="binding site" evidence="1">
    <location>
        <position position="112"/>
    </location>
    <ligand>
        <name>anthranilate</name>
        <dbReference type="ChEBI" id="CHEBI:16567"/>
        <label>1</label>
    </ligand>
</feature>
<feature type="binding site" evidence="1">
    <location>
        <position position="121"/>
    </location>
    <ligand>
        <name>5-phospho-alpha-D-ribose 1-diphosphate</name>
        <dbReference type="ChEBI" id="CHEBI:58017"/>
    </ligand>
</feature>
<feature type="binding site" evidence="1">
    <location>
        <position position="167"/>
    </location>
    <ligand>
        <name>anthranilate</name>
        <dbReference type="ChEBI" id="CHEBI:16567"/>
        <label>2</label>
    </ligand>
</feature>
<feature type="binding site" evidence="1">
    <location>
        <position position="225"/>
    </location>
    <ligand>
        <name>Mg(2+)</name>
        <dbReference type="ChEBI" id="CHEBI:18420"/>
        <label>2</label>
    </ligand>
</feature>
<feature type="binding site" evidence="1">
    <location>
        <position position="226"/>
    </location>
    <ligand>
        <name>Mg(2+)</name>
        <dbReference type="ChEBI" id="CHEBI:18420"/>
        <label>1</label>
    </ligand>
</feature>
<feature type="binding site" evidence="1">
    <location>
        <position position="226"/>
    </location>
    <ligand>
        <name>Mg(2+)</name>
        <dbReference type="ChEBI" id="CHEBI:18420"/>
        <label>2</label>
    </ligand>
</feature>
<reference key="1">
    <citation type="journal article" date="2009" name="PLoS ONE">
        <title>Genome degradation in Brucella ovis corresponds with narrowing of its host range and tissue tropism.</title>
        <authorList>
            <person name="Tsolis R.M."/>
            <person name="Seshadri R."/>
            <person name="Santos R.L."/>
            <person name="Sangari F.J."/>
            <person name="Lobo J.M."/>
            <person name="de Jong M.F."/>
            <person name="Ren Q."/>
            <person name="Myers G."/>
            <person name="Brinkac L.M."/>
            <person name="Nelson W.C."/>
            <person name="Deboy R.T."/>
            <person name="Angiuoli S."/>
            <person name="Khouri H."/>
            <person name="Dimitrov G."/>
            <person name="Robinson J.R."/>
            <person name="Mulligan S."/>
            <person name="Walker R.L."/>
            <person name="Elzer P.E."/>
            <person name="Hassan K.A."/>
            <person name="Paulsen I.T."/>
        </authorList>
    </citation>
    <scope>NUCLEOTIDE SEQUENCE [LARGE SCALE GENOMIC DNA]</scope>
    <source>
        <strain>ATCC 25840 / 63/290 / NCTC 10512</strain>
    </source>
</reference>
<evidence type="ECO:0000255" key="1">
    <source>
        <dbReference type="HAMAP-Rule" id="MF_00211"/>
    </source>
</evidence>
<evidence type="ECO:0000305" key="2"/>
<accession>A5VQR4</accession>
<proteinExistence type="inferred from homology"/>
<gene>
    <name evidence="1" type="primary">trpD</name>
    <name type="ordered locus">BOV_1099</name>
</gene>
<name>TRPD_BRUO2</name>
<comment type="function">
    <text evidence="1">Catalyzes the transfer of the phosphoribosyl group of 5-phosphorylribose-1-pyrophosphate (PRPP) to anthranilate to yield N-(5'-phosphoribosyl)-anthranilate (PRA).</text>
</comment>
<comment type="catalytic activity">
    <reaction evidence="1">
        <text>N-(5-phospho-beta-D-ribosyl)anthranilate + diphosphate = 5-phospho-alpha-D-ribose 1-diphosphate + anthranilate</text>
        <dbReference type="Rhea" id="RHEA:11768"/>
        <dbReference type="ChEBI" id="CHEBI:16567"/>
        <dbReference type="ChEBI" id="CHEBI:18277"/>
        <dbReference type="ChEBI" id="CHEBI:33019"/>
        <dbReference type="ChEBI" id="CHEBI:58017"/>
        <dbReference type="EC" id="2.4.2.18"/>
    </reaction>
</comment>
<comment type="cofactor">
    <cofactor evidence="1">
        <name>Mg(2+)</name>
        <dbReference type="ChEBI" id="CHEBI:18420"/>
    </cofactor>
    <text evidence="1">Binds 2 magnesium ions per monomer.</text>
</comment>
<comment type="pathway">
    <text evidence="1">Amino-acid biosynthesis; L-tryptophan biosynthesis; L-tryptophan from chorismate: step 2/5.</text>
</comment>
<comment type="subunit">
    <text evidence="1">Homodimer.</text>
</comment>
<comment type="similarity">
    <text evidence="1">Belongs to the anthranilate phosphoribosyltransferase family.</text>
</comment>
<comment type="sequence caution" evidence="2">
    <conflict type="erroneous initiation">
        <sequence resource="EMBL-CDS" id="ABQ61085"/>
    </conflict>
    <text>Truncated N-terminus.</text>
</comment>
<keyword id="KW-0028">Amino-acid biosynthesis</keyword>
<keyword id="KW-0057">Aromatic amino acid biosynthesis</keyword>
<keyword id="KW-0328">Glycosyltransferase</keyword>
<keyword id="KW-0460">Magnesium</keyword>
<keyword id="KW-0479">Metal-binding</keyword>
<keyword id="KW-0808">Transferase</keyword>
<keyword id="KW-0822">Tryptophan biosynthesis</keyword>
<sequence length="339" mass="34853">MADLKPYIAKAASGEPLPLGDAKAAFDIMMSGQATPSQIGGFLMALRVRGETVPEIAGAVASMRSRMIPVIAPDDAMDIVGTGGDQSGSYNVSSCTAFVVAGAGVPVAKHGNRALSSRSGAADALAALGINIEADADTIGRSISEAGLGFMFAPMHHSAMRHVGPSRVELGTRTIFNLLGPLSNPASVKRQLVGIFAPQWLEPLAHVLKELGSETAWVVYGDGLDEMTTAGTTQVAALENGQIRTFEITPEEVGLRRCSPAELKGGEAAENAKALLGVLEGKDSAYRDIVLLNSGAALVVAGKAENLKDGIAQAVQSIDSGAALAVLQKVIAVSNDKPA</sequence>